<comment type="function">
    <text evidence="1">The phosphoenolpyruvate-dependent sugar phosphotransferase system (sugar PTS), a major carbohydrate active transport system, catalyzes the phosphorylation of incoming sugar substrates concomitantly with their translocation across the cell membrane. This system is involved in glucose transport.</text>
</comment>
<comment type="catalytic activity">
    <reaction evidence="1">
        <text>N(pros)-phospho-L-histidyl-[protein] + D-glucose(out) = D-glucose 6-phosphate(in) + L-histidyl-[protein]</text>
        <dbReference type="Rhea" id="RHEA:33367"/>
        <dbReference type="Rhea" id="RHEA-COMP:9745"/>
        <dbReference type="Rhea" id="RHEA-COMP:9746"/>
        <dbReference type="ChEBI" id="CHEBI:4167"/>
        <dbReference type="ChEBI" id="CHEBI:29979"/>
        <dbReference type="ChEBI" id="CHEBI:61548"/>
        <dbReference type="ChEBI" id="CHEBI:64837"/>
        <dbReference type="EC" id="2.7.1.199"/>
    </reaction>
</comment>
<comment type="subcellular location">
    <subcellularLocation>
        <location evidence="4">Cell membrane</location>
        <topology evidence="4">Multi-pass membrane protein</topology>
    </subcellularLocation>
</comment>
<comment type="domain">
    <text evidence="4">The EIIC domain forms the PTS system translocation channel and contains the specific substrate-binding site.</text>
</comment>
<comment type="domain">
    <text evidence="3">The EIIB domain is phosphorylated by phospho-EIIA on a cysteinyl or histidyl residue, depending on the transported sugar. Then, it transfers the phosphoryl group to the sugar substrate concomitantly with the sugar uptake processed by the EIIC domain.</text>
</comment>
<comment type="domain">
    <text evidence="2">The EIIA domain is phosphorylated by phospho-HPr on a histidyl residue. Then, it transfers the phosphoryl group to the EIIB domain.</text>
</comment>
<organism>
    <name type="scientific">Staphylococcus epidermidis</name>
    <dbReference type="NCBI Taxonomy" id="1282"/>
    <lineage>
        <taxon>Bacteria</taxon>
        <taxon>Bacillati</taxon>
        <taxon>Bacillota</taxon>
        <taxon>Bacilli</taxon>
        <taxon>Bacillales</taxon>
        <taxon>Staphylococcaceae</taxon>
        <taxon>Staphylococcus</taxon>
    </lineage>
</organism>
<sequence>MFKKLFGQMQRIGKALMLPVAILPAAGLLLAIGTAFQGEALQHYLPFIKNDIVQQIANMLTGAGGIIFDNLPIIFALGVAIGLAGGDGVAAIAAFVGFIILNKTMGAFLHVTPDKLSDPTNGYANVLGIPTLQTGVFGGIIIGALAAWCYNKFYNITLPSYLGFFAGKRFVPIMMATTSFILAFPMAIIWPTIQNGLNAFSEGLLDSNTGLAVFLFGFIKRLLIPFGLHHIFHAPFWFEFGSWKNAAGEIIRGDQRIFIEQIREGAHLTSGKFMQGEFPVMMFGLPAAALAIYQTAKPENKKVVAGLMISAALTSFLTGITEPLEFSFLFVAPFLFVIHAVLDGLSFLTLYLLNVHLGYTFSGGFIDYVLLGILPNKTAWWLVIPVGIIYAVIYYFVFRFLIVKFNYKTPGREDKKSSVTTTSASQLPFDVLKAMGGKENIKHLDACITRLRVEVNEKSKVDVAGLKSLGASGVLEVGNNMQAIFGPKSDQIKHDMAKIISGEITKPSETTIDEEVSDDPVHVEDIVETEIYAPGHGEIIPLSEVPDKVFSEKMMGDGIGFVPDSGEIVAPFDGTVKTIFPTKHAIGLESDSGVEVLIHIGIDTVKLNGEGFESLVNTDEPVTQGQPLMKIDLEYLKEHAPSIITPVIITNQEDKTLTIEDVKQVDPGKAIMTIK</sequence>
<reference key="1">
    <citation type="submission" date="2001-11" db="EMBL/GenBank/DDBJ databases">
        <title>EII-glucose permease GlcA influences expression of polysaccharide intercellular adhesin.</title>
        <authorList>
            <person name="Kiel K."/>
            <person name="Knobloch J.K.M."/>
            <person name="Mack D."/>
        </authorList>
    </citation>
    <scope>NUCLEOTIDE SEQUENCE [GENOMIC DNA]</scope>
    <source>
        <strain>Clinical isolate 1457</strain>
    </source>
</reference>
<dbReference type="EC" id="2.7.1.199" evidence="1"/>
<dbReference type="EMBL" id="AF443793">
    <property type="protein sequence ID" value="AAL38016.1"/>
    <property type="molecule type" value="Genomic_DNA"/>
</dbReference>
<dbReference type="RefSeq" id="WP_001832339.1">
    <property type="nucleotide sequence ID" value="NZ_WLVA01000001.1"/>
</dbReference>
<dbReference type="SMR" id="Q8VRH0"/>
<dbReference type="GeneID" id="50017816"/>
<dbReference type="PATRIC" id="fig|1282.1160.peg.836"/>
<dbReference type="OMA" id="AWAFNRF"/>
<dbReference type="GO" id="GO:0005886">
    <property type="term" value="C:plasma membrane"/>
    <property type="evidence" value="ECO:0007669"/>
    <property type="project" value="UniProtKB-SubCell"/>
</dbReference>
<dbReference type="GO" id="GO:0055056">
    <property type="term" value="F:D-glucose transmembrane transporter activity"/>
    <property type="evidence" value="ECO:0007669"/>
    <property type="project" value="InterPro"/>
</dbReference>
<dbReference type="GO" id="GO:0016301">
    <property type="term" value="F:kinase activity"/>
    <property type="evidence" value="ECO:0007669"/>
    <property type="project" value="UniProtKB-KW"/>
</dbReference>
<dbReference type="GO" id="GO:0008982">
    <property type="term" value="F:protein-N(PI)-phosphohistidine-sugar phosphotransferase activity"/>
    <property type="evidence" value="ECO:0007669"/>
    <property type="project" value="InterPro"/>
</dbReference>
<dbReference type="GO" id="GO:0090563">
    <property type="term" value="F:protein-phosphocysteine-sugar phosphotransferase activity"/>
    <property type="evidence" value="ECO:0007669"/>
    <property type="project" value="TreeGrafter"/>
</dbReference>
<dbReference type="GO" id="GO:1904659">
    <property type="term" value="P:D-glucose transmembrane transport"/>
    <property type="evidence" value="ECO:0007669"/>
    <property type="project" value="InterPro"/>
</dbReference>
<dbReference type="GO" id="GO:0009401">
    <property type="term" value="P:phosphoenolpyruvate-dependent sugar phosphotransferase system"/>
    <property type="evidence" value="ECO:0007669"/>
    <property type="project" value="UniProtKB-KW"/>
</dbReference>
<dbReference type="CDD" id="cd00212">
    <property type="entry name" value="PTS_IIB_glc"/>
    <property type="match status" value="1"/>
</dbReference>
<dbReference type="FunFam" id="2.70.70.10:FF:000001">
    <property type="entry name" value="PTS system glucose-specific IIA component"/>
    <property type="match status" value="1"/>
</dbReference>
<dbReference type="FunFam" id="3.30.1360.60:FF:000001">
    <property type="entry name" value="PTS system glucose-specific IIBC component PtsG"/>
    <property type="match status" value="1"/>
</dbReference>
<dbReference type="Gene3D" id="2.70.70.10">
    <property type="entry name" value="Glucose Permease (Domain IIA)"/>
    <property type="match status" value="1"/>
</dbReference>
<dbReference type="Gene3D" id="3.30.1360.60">
    <property type="entry name" value="Glucose permease domain IIB"/>
    <property type="match status" value="1"/>
</dbReference>
<dbReference type="InterPro" id="IPR011055">
    <property type="entry name" value="Dup_hybrid_motif"/>
</dbReference>
<dbReference type="InterPro" id="IPR036878">
    <property type="entry name" value="Glu_permease_IIB"/>
</dbReference>
<dbReference type="InterPro" id="IPR018113">
    <property type="entry name" value="PTrfase_EIIB_Cys"/>
</dbReference>
<dbReference type="InterPro" id="IPR001127">
    <property type="entry name" value="PTS_EIIA_1_perm"/>
</dbReference>
<dbReference type="InterPro" id="IPR003352">
    <property type="entry name" value="PTS_EIIC"/>
</dbReference>
<dbReference type="InterPro" id="IPR013013">
    <property type="entry name" value="PTS_EIIC_1"/>
</dbReference>
<dbReference type="InterPro" id="IPR050429">
    <property type="entry name" value="PTS_Glucose_EIICBA"/>
</dbReference>
<dbReference type="InterPro" id="IPR001996">
    <property type="entry name" value="PTS_IIB_1"/>
</dbReference>
<dbReference type="InterPro" id="IPR011299">
    <property type="entry name" value="PTS_IIBC_glc"/>
</dbReference>
<dbReference type="NCBIfam" id="TIGR00826">
    <property type="entry name" value="EIIB_glc"/>
    <property type="match status" value="1"/>
</dbReference>
<dbReference type="NCBIfam" id="TIGR00830">
    <property type="entry name" value="PTBA"/>
    <property type="match status" value="1"/>
</dbReference>
<dbReference type="NCBIfam" id="TIGR02002">
    <property type="entry name" value="PTS-II-BC-glcB"/>
    <property type="match status" value="1"/>
</dbReference>
<dbReference type="PANTHER" id="PTHR30009">
    <property type="entry name" value="CYTOCHROME C-TYPE SYNTHESIS PROTEIN AND PTS TRANSMEMBRANE COMPONENT"/>
    <property type="match status" value="1"/>
</dbReference>
<dbReference type="PANTHER" id="PTHR30009:SF20">
    <property type="entry name" value="PTS SYSTEM GLUCOSE-SPECIFIC EIICB COMPONENT-RELATED"/>
    <property type="match status" value="1"/>
</dbReference>
<dbReference type="Pfam" id="PF00358">
    <property type="entry name" value="PTS_EIIA_1"/>
    <property type="match status" value="1"/>
</dbReference>
<dbReference type="Pfam" id="PF00367">
    <property type="entry name" value="PTS_EIIB"/>
    <property type="match status" value="1"/>
</dbReference>
<dbReference type="Pfam" id="PF02378">
    <property type="entry name" value="PTS_EIIC"/>
    <property type="match status" value="1"/>
</dbReference>
<dbReference type="SUPFAM" id="SSF51261">
    <property type="entry name" value="Duplicated hybrid motif"/>
    <property type="match status" value="1"/>
</dbReference>
<dbReference type="SUPFAM" id="SSF55604">
    <property type="entry name" value="Glucose permease domain IIB"/>
    <property type="match status" value="1"/>
</dbReference>
<dbReference type="PROSITE" id="PS51093">
    <property type="entry name" value="PTS_EIIA_TYPE_1"/>
    <property type="match status" value="1"/>
</dbReference>
<dbReference type="PROSITE" id="PS00371">
    <property type="entry name" value="PTS_EIIA_TYPE_1_HIS"/>
    <property type="match status" value="1"/>
</dbReference>
<dbReference type="PROSITE" id="PS51098">
    <property type="entry name" value="PTS_EIIB_TYPE_1"/>
    <property type="match status" value="1"/>
</dbReference>
<dbReference type="PROSITE" id="PS01035">
    <property type="entry name" value="PTS_EIIB_TYPE_1_CYS"/>
    <property type="match status" value="1"/>
</dbReference>
<dbReference type="PROSITE" id="PS51103">
    <property type="entry name" value="PTS_EIIC_TYPE_1"/>
    <property type="match status" value="1"/>
</dbReference>
<feature type="chain" id="PRO_0000351402" description="PTS system glucose-specific EIICBA component">
    <location>
        <begin position="1"/>
        <end position="675"/>
    </location>
</feature>
<feature type="transmembrane region" description="Helical" evidence="4">
    <location>
        <begin position="16"/>
        <end position="36"/>
    </location>
</feature>
<feature type="transmembrane region" description="Helical" evidence="4">
    <location>
        <begin position="59"/>
        <end position="79"/>
    </location>
</feature>
<feature type="transmembrane region" description="Helical" evidence="4">
    <location>
        <begin position="81"/>
        <end position="101"/>
    </location>
</feature>
<feature type="transmembrane region" description="Helical" evidence="4">
    <location>
        <begin position="126"/>
        <end position="146"/>
    </location>
</feature>
<feature type="transmembrane region" description="Helical" evidence="4">
    <location>
        <begin position="170"/>
        <end position="190"/>
    </location>
</feature>
<feature type="transmembrane region" description="Helical" evidence="4">
    <location>
        <begin position="211"/>
        <end position="231"/>
    </location>
</feature>
<feature type="transmembrane region" description="Helical" evidence="4">
    <location>
        <begin position="273"/>
        <end position="293"/>
    </location>
</feature>
<feature type="transmembrane region" description="Helical" evidence="4">
    <location>
        <begin position="303"/>
        <end position="323"/>
    </location>
</feature>
<feature type="transmembrane region" description="Helical" evidence="4">
    <location>
        <begin position="328"/>
        <end position="348"/>
    </location>
</feature>
<feature type="transmembrane region" description="Helical" evidence="4">
    <location>
        <begin position="355"/>
        <end position="375"/>
    </location>
</feature>
<feature type="transmembrane region" description="Helical" evidence="4">
    <location>
        <begin position="378"/>
        <end position="398"/>
    </location>
</feature>
<feature type="domain" description="PTS EIIC type-1" evidence="4">
    <location>
        <begin position="3"/>
        <end position="414"/>
    </location>
</feature>
<feature type="domain" description="PTS EIIB type-1" evidence="3">
    <location>
        <begin position="425"/>
        <end position="506"/>
    </location>
</feature>
<feature type="domain" description="PTS EIIA type-1" evidence="2">
    <location>
        <begin position="547"/>
        <end position="651"/>
    </location>
</feature>
<feature type="active site" description="Phosphocysteine intermediate; for EIIB activity" evidence="3">
    <location>
        <position position="447"/>
    </location>
</feature>
<feature type="active site" description="Tele-phosphohistidine intermediate; for EIIA activity" evidence="2">
    <location>
        <position position="599"/>
    </location>
</feature>
<proteinExistence type="inferred from homology"/>
<evidence type="ECO:0000250" key="1">
    <source>
        <dbReference type="UniProtKB" id="Q57071"/>
    </source>
</evidence>
<evidence type="ECO:0000255" key="2">
    <source>
        <dbReference type="PROSITE-ProRule" id="PRU00416"/>
    </source>
</evidence>
<evidence type="ECO:0000255" key="3">
    <source>
        <dbReference type="PROSITE-ProRule" id="PRU00421"/>
    </source>
</evidence>
<evidence type="ECO:0000255" key="4">
    <source>
        <dbReference type="PROSITE-ProRule" id="PRU00426"/>
    </source>
</evidence>
<evidence type="ECO:0000305" key="5"/>
<name>PTG3C_STAEP</name>
<protein>
    <recommendedName>
        <fullName evidence="1">PTS system glucose-specific EIICBA component</fullName>
        <ecNumber evidence="1">2.7.1.199</ecNumber>
    </recommendedName>
    <alternativeName>
        <fullName evidence="1">EIICBA-Glc</fullName>
        <shortName evidence="1">EII-Glc</shortName>
    </alternativeName>
    <alternativeName>
        <fullName evidence="5">EIICBA-Glc 1</fullName>
    </alternativeName>
    <domain>
        <recommendedName>
            <fullName evidence="1">Glucose permease IIC component</fullName>
        </recommendedName>
        <alternativeName>
            <fullName evidence="1">PTS system glucose-specific EIIC component</fullName>
        </alternativeName>
    </domain>
    <domain>
        <recommendedName>
            <fullName evidence="1">Glucose-specific phosphotransferase enzyme IIB component</fullName>
        </recommendedName>
        <alternativeName>
            <fullName evidence="1">PTS system glucose-specific EIIB component</fullName>
        </alternativeName>
    </domain>
    <domain>
        <recommendedName>
            <fullName evidence="1">Glucose-specific phosphotransferase enzyme IIA component</fullName>
        </recommendedName>
        <alternativeName>
            <fullName evidence="1">PTS system glucose-specific EIIA component</fullName>
        </alternativeName>
    </domain>
</protein>
<keyword id="KW-1003">Cell membrane</keyword>
<keyword id="KW-0418">Kinase</keyword>
<keyword id="KW-0472">Membrane</keyword>
<keyword id="KW-0598">Phosphotransferase system</keyword>
<keyword id="KW-0762">Sugar transport</keyword>
<keyword id="KW-0808">Transferase</keyword>
<keyword id="KW-0812">Transmembrane</keyword>
<keyword id="KW-1133">Transmembrane helix</keyword>
<keyword id="KW-0813">Transport</keyword>
<accession>Q8VRH0</accession>
<gene>
    <name type="primary">ptsG</name>
    <name type="synonym">glcA</name>
</gene>